<gene>
    <name type="primary">wefC</name>
</gene>
<name>WEFC_STROR</name>
<reference key="1">
    <citation type="submission" date="2004-06" db="EMBL/GenBank/DDBJ databases">
        <title>Genetic basis of coaggregation receptor polysaccharide structure and function.</title>
        <authorList>
            <person name="Yoshida Y."/>
            <person name="Cisar J.O."/>
        </authorList>
    </citation>
    <scope>NUCLEOTIDE SEQUENCE [GENOMIC DNA]</scope>
</reference>
<reference key="2">
    <citation type="journal article" date="2005" name="PLoS Comput. Biol.">
        <title>Stealth proteins: in silico identification of a novel protein family rendering bacterial pathogens invisible to host immune defense.</title>
        <authorList>
            <person name="Sperisen P."/>
            <person name="Schmid C.D."/>
            <person name="Bucher P."/>
            <person name="Zilian O."/>
        </authorList>
    </citation>
    <scope>IDENTIFICATION AS A STEALTH PROTEIN</scope>
    <scope>PREDICTION OF FUNCTION</scope>
</reference>
<feature type="chain" id="PRO_0000235966" description="Receptor polysaccharide phosphotransferase WefC">
    <location>
        <begin position="1"/>
        <end position="332"/>
    </location>
</feature>
<comment type="miscellaneous">
    <text>Stealth proteins are part of a protein family that is conserved from bacteria to higher eukaryotes. Family members were first identified in microbes as proteins that help pathogens to elude the host innate immune system. Microbial stealth proteins are involved in the biosynthesis of exopolysaccharides. Stealth proteins are predicted to function as hexose-1-phosphoryltransferases.</text>
</comment>
<comment type="similarity">
    <text evidence="1">Belongs to the stealth family.</text>
</comment>
<sequence length="332" mass="38349">MNKIDFVVTWVDGGDPIWQAKKAKYSGAVDTSKNSMNSVKAYRDWGTFKYWFRGVEKFAPWVNKVYLVTDQQKPSWLDINSEKLVLVDHTEIICNDYLPVFSANPIESNIHRIPGLSEHFVFFNDDMYLTAPVEPTDFFSEDGLPKYNTALSPIIPERYGTGNFQVNDMEIVTSYFSRNEILKNGQFFDPKQGLKSIVKSLLYRNSQFICGFWESHLPYPLLRSTMNLVWEKEKAVLERTSASRFRNPSDTNVWLFKYWQIASGKYAIGNPKLGGLFSLDNAGPDFWKILNSGKYQIMCINDGFNIQDEEQVMTDFIKAMDQLLPDRSSFEI</sequence>
<accession>Q6L5S6</accession>
<keyword id="KW-0270">Exopolysaccharide synthesis</keyword>
<keyword id="KW-0808">Transferase</keyword>
<dbReference type="EC" id="2.7.-.-"/>
<dbReference type="EMBL" id="AB181234">
    <property type="protein sequence ID" value="BAD22622.1"/>
    <property type="molecule type" value="Genomic_DNA"/>
</dbReference>
<dbReference type="RefSeq" id="WP_061421395.1">
    <property type="nucleotide sequence ID" value="NZ_CP079724.1"/>
</dbReference>
<dbReference type="SMR" id="Q6L5S6"/>
<dbReference type="GO" id="GO:0016772">
    <property type="term" value="F:transferase activity, transferring phosphorus-containing groups"/>
    <property type="evidence" value="ECO:0007669"/>
    <property type="project" value="InterPro"/>
</dbReference>
<dbReference type="GO" id="GO:0000271">
    <property type="term" value="P:polysaccharide biosynthetic process"/>
    <property type="evidence" value="ECO:0007669"/>
    <property type="project" value="UniProtKB-KW"/>
</dbReference>
<dbReference type="InterPro" id="IPR047141">
    <property type="entry name" value="Stealth"/>
</dbReference>
<dbReference type="InterPro" id="IPR031358">
    <property type="entry name" value="Stealth_CR1"/>
</dbReference>
<dbReference type="InterPro" id="IPR021520">
    <property type="entry name" value="Stealth_CR2"/>
</dbReference>
<dbReference type="InterPro" id="IPR031357">
    <property type="entry name" value="Stealth_CR3"/>
</dbReference>
<dbReference type="PANTHER" id="PTHR24045">
    <property type="match status" value="1"/>
</dbReference>
<dbReference type="PANTHER" id="PTHR24045:SF0">
    <property type="entry name" value="N-ACETYLGLUCOSAMINE-1-PHOSPHOTRANSFERASE SUBUNITS ALPHA_BETA"/>
    <property type="match status" value="1"/>
</dbReference>
<dbReference type="Pfam" id="PF17101">
    <property type="entry name" value="Stealth_CR1"/>
    <property type="match status" value="1"/>
</dbReference>
<dbReference type="Pfam" id="PF11380">
    <property type="entry name" value="Stealth_CR2"/>
    <property type="match status" value="1"/>
</dbReference>
<dbReference type="Pfam" id="PF17102">
    <property type="entry name" value="Stealth_CR3"/>
    <property type="match status" value="1"/>
</dbReference>
<evidence type="ECO:0000305" key="1"/>
<organism>
    <name type="scientific">Streptococcus oralis</name>
    <dbReference type="NCBI Taxonomy" id="1303"/>
    <lineage>
        <taxon>Bacteria</taxon>
        <taxon>Bacillati</taxon>
        <taxon>Bacillota</taxon>
        <taxon>Bacilli</taxon>
        <taxon>Lactobacillales</taxon>
        <taxon>Streptococcaceae</taxon>
        <taxon>Streptococcus</taxon>
    </lineage>
</organism>
<proteinExistence type="inferred from homology"/>
<protein>
    <recommendedName>
        <fullName>Receptor polysaccharide phosphotransferase WefC</fullName>
        <ecNumber>2.7.-.-</ecNumber>
    </recommendedName>
    <alternativeName>
        <fullName>Stealth protein WefC</fullName>
    </alternativeName>
</protein>